<feature type="chain" id="PRO_0000374192" description="tRNA-2-methylthio-N(6)-dimethylallyladenosine synthase">
    <location>
        <begin position="1"/>
        <end position="457"/>
    </location>
</feature>
<feature type="domain" description="MTTase N-terminal" evidence="1">
    <location>
        <begin position="3"/>
        <end position="120"/>
    </location>
</feature>
<feature type="domain" description="Radical SAM core" evidence="2">
    <location>
        <begin position="143"/>
        <end position="377"/>
    </location>
</feature>
<feature type="domain" description="TRAM" evidence="1">
    <location>
        <begin position="380"/>
        <end position="447"/>
    </location>
</feature>
<feature type="binding site" evidence="1">
    <location>
        <position position="12"/>
    </location>
    <ligand>
        <name>[4Fe-4S] cluster</name>
        <dbReference type="ChEBI" id="CHEBI:49883"/>
        <label>1</label>
    </ligand>
</feature>
<feature type="binding site" evidence="1">
    <location>
        <position position="49"/>
    </location>
    <ligand>
        <name>[4Fe-4S] cluster</name>
        <dbReference type="ChEBI" id="CHEBI:49883"/>
        <label>1</label>
    </ligand>
</feature>
<feature type="binding site" evidence="1">
    <location>
        <position position="83"/>
    </location>
    <ligand>
        <name>[4Fe-4S] cluster</name>
        <dbReference type="ChEBI" id="CHEBI:49883"/>
        <label>1</label>
    </ligand>
</feature>
<feature type="binding site" evidence="1">
    <location>
        <position position="157"/>
    </location>
    <ligand>
        <name>[4Fe-4S] cluster</name>
        <dbReference type="ChEBI" id="CHEBI:49883"/>
        <label>2</label>
        <note>4Fe-4S-S-AdoMet</note>
    </ligand>
</feature>
<feature type="binding site" evidence="1">
    <location>
        <position position="161"/>
    </location>
    <ligand>
        <name>[4Fe-4S] cluster</name>
        <dbReference type="ChEBI" id="CHEBI:49883"/>
        <label>2</label>
        <note>4Fe-4S-S-AdoMet</note>
    </ligand>
</feature>
<feature type="binding site" evidence="1">
    <location>
        <position position="164"/>
    </location>
    <ligand>
        <name>[4Fe-4S] cluster</name>
        <dbReference type="ChEBI" id="CHEBI:49883"/>
        <label>2</label>
        <note>4Fe-4S-S-AdoMet</note>
    </ligand>
</feature>
<dbReference type="EC" id="2.8.4.3" evidence="1"/>
<dbReference type="EMBL" id="CP000270">
    <property type="protein sequence ID" value="ABE32304.1"/>
    <property type="molecule type" value="Genomic_DNA"/>
</dbReference>
<dbReference type="RefSeq" id="WP_011489793.1">
    <property type="nucleotide sequence ID" value="NC_007951.1"/>
</dbReference>
<dbReference type="SMR" id="Q13UD5"/>
<dbReference type="STRING" id="266265.Bxe_A0630"/>
<dbReference type="KEGG" id="bxb:DR64_2798"/>
<dbReference type="KEGG" id="bxe:Bxe_A0630"/>
<dbReference type="PATRIC" id="fig|266265.5.peg.3981"/>
<dbReference type="eggNOG" id="COG0621">
    <property type="taxonomic scope" value="Bacteria"/>
</dbReference>
<dbReference type="OrthoDB" id="9805215at2"/>
<dbReference type="Proteomes" id="UP000001817">
    <property type="component" value="Chromosome 1"/>
</dbReference>
<dbReference type="GO" id="GO:0005829">
    <property type="term" value="C:cytosol"/>
    <property type="evidence" value="ECO:0007669"/>
    <property type="project" value="TreeGrafter"/>
</dbReference>
<dbReference type="GO" id="GO:0051539">
    <property type="term" value="F:4 iron, 4 sulfur cluster binding"/>
    <property type="evidence" value="ECO:0007669"/>
    <property type="project" value="UniProtKB-UniRule"/>
</dbReference>
<dbReference type="GO" id="GO:0046872">
    <property type="term" value="F:metal ion binding"/>
    <property type="evidence" value="ECO:0007669"/>
    <property type="project" value="UniProtKB-KW"/>
</dbReference>
<dbReference type="GO" id="GO:0035597">
    <property type="term" value="F:N6-isopentenyladenosine methylthiotransferase activity"/>
    <property type="evidence" value="ECO:0007669"/>
    <property type="project" value="TreeGrafter"/>
</dbReference>
<dbReference type="CDD" id="cd01335">
    <property type="entry name" value="Radical_SAM"/>
    <property type="match status" value="1"/>
</dbReference>
<dbReference type="FunFam" id="3.40.50.12160:FF:000001">
    <property type="entry name" value="tRNA-2-methylthio-N(6)-dimethylallyladenosine synthase"/>
    <property type="match status" value="1"/>
</dbReference>
<dbReference type="FunFam" id="3.80.30.20:FF:000001">
    <property type="entry name" value="tRNA-2-methylthio-N(6)-dimethylallyladenosine synthase 2"/>
    <property type="match status" value="1"/>
</dbReference>
<dbReference type="Gene3D" id="3.40.50.12160">
    <property type="entry name" value="Methylthiotransferase, N-terminal domain"/>
    <property type="match status" value="1"/>
</dbReference>
<dbReference type="Gene3D" id="3.80.30.20">
    <property type="entry name" value="tm_1862 like domain"/>
    <property type="match status" value="1"/>
</dbReference>
<dbReference type="HAMAP" id="MF_01864">
    <property type="entry name" value="tRNA_metthiotr_MiaB"/>
    <property type="match status" value="1"/>
</dbReference>
<dbReference type="InterPro" id="IPR006638">
    <property type="entry name" value="Elp3/MiaA/NifB-like_rSAM"/>
</dbReference>
<dbReference type="InterPro" id="IPR005839">
    <property type="entry name" value="Methylthiotransferase"/>
</dbReference>
<dbReference type="InterPro" id="IPR020612">
    <property type="entry name" value="Methylthiotransferase_CS"/>
</dbReference>
<dbReference type="InterPro" id="IPR013848">
    <property type="entry name" value="Methylthiotransferase_N"/>
</dbReference>
<dbReference type="InterPro" id="IPR038135">
    <property type="entry name" value="Methylthiotransferase_N_sf"/>
</dbReference>
<dbReference type="InterPro" id="IPR006463">
    <property type="entry name" value="MiaB_methiolase"/>
</dbReference>
<dbReference type="InterPro" id="IPR007197">
    <property type="entry name" value="rSAM"/>
</dbReference>
<dbReference type="InterPro" id="IPR023404">
    <property type="entry name" value="rSAM_horseshoe"/>
</dbReference>
<dbReference type="InterPro" id="IPR002792">
    <property type="entry name" value="TRAM_dom"/>
</dbReference>
<dbReference type="NCBIfam" id="TIGR01574">
    <property type="entry name" value="miaB-methiolase"/>
    <property type="match status" value="1"/>
</dbReference>
<dbReference type="NCBIfam" id="TIGR00089">
    <property type="entry name" value="MiaB/RimO family radical SAM methylthiotransferase"/>
    <property type="match status" value="1"/>
</dbReference>
<dbReference type="PANTHER" id="PTHR43020">
    <property type="entry name" value="CDK5 REGULATORY SUBUNIT-ASSOCIATED PROTEIN 1"/>
    <property type="match status" value="1"/>
</dbReference>
<dbReference type="PANTHER" id="PTHR43020:SF2">
    <property type="entry name" value="MITOCHONDRIAL TRNA METHYLTHIOTRANSFERASE CDK5RAP1"/>
    <property type="match status" value="1"/>
</dbReference>
<dbReference type="Pfam" id="PF04055">
    <property type="entry name" value="Radical_SAM"/>
    <property type="match status" value="1"/>
</dbReference>
<dbReference type="Pfam" id="PF01938">
    <property type="entry name" value="TRAM"/>
    <property type="match status" value="1"/>
</dbReference>
<dbReference type="Pfam" id="PF00919">
    <property type="entry name" value="UPF0004"/>
    <property type="match status" value="1"/>
</dbReference>
<dbReference type="SFLD" id="SFLDF00273">
    <property type="entry name" value="(dimethylallyl)adenosine_tRNA"/>
    <property type="match status" value="1"/>
</dbReference>
<dbReference type="SFLD" id="SFLDG01082">
    <property type="entry name" value="B12-binding_domain_containing"/>
    <property type="match status" value="1"/>
</dbReference>
<dbReference type="SFLD" id="SFLDG01061">
    <property type="entry name" value="methylthiotransferase"/>
    <property type="match status" value="1"/>
</dbReference>
<dbReference type="SMART" id="SM00729">
    <property type="entry name" value="Elp3"/>
    <property type="match status" value="1"/>
</dbReference>
<dbReference type="SUPFAM" id="SSF102114">
    <property type="entry name" value="Radical SAM enzymes"/>
    <property type="match status" value="1"/>
</dbReference>
<dbReference type="PROSITE" id="PS51449">
    <property type="entry name" value="MTTASE_N"/>
    <property type="match status" value="1"/>
</dbReference>
<dbReference type="PROSITE" id="PS01278">
    <property type="entry name" value="MTTASE_RADICAL"/>
    <property type="match status" value="1"/>
</dbReference>
<dbReference type="PROSITE" id="PS51918">
    <property type="entry name" value="RADICAL_SAM"/>
    <property type="match status" value="1"/>
</dbReference>
<dbReference type="PROSITE" id="PS50926">
    <property type="entry name" value="TRAM"/>
    <property type="match status" value="1"/>
</dbReference>
<keyword id="KW-0004">4Fe-4S</keyword>
<keyword id="KW-0963">Cytoplasm</keyword>
<keyword id="KW-0408">Iron</keyword>
<keyword id="KW-0411">Iron-sulfur</keyword>
<keyword id="KW-0479">Metal-binding</keyword>
<keyword id="KW-1185">Reference proteome</keyword>
<keyword id="KW-0949">S-adenosyl-L-methionine</keyword>
<keyword id="KW-0808">Transferase</keyword>
<keyword id="KW-0819">tRNA processing</keyword>
<name>MIAB_PARXL</name>
<organism>
    <name type="scientific">Paraburkholderia xenovorans (strain LB400)</name>
    <dbReference type="NCBI Taxonomy" id="266265"/>
    <lineage>
        <taxon>Bacteria</taxon>
        <taxon>Pseudomonadati</taxon>
        <taxon>Pseudomonadota</taxon>
        <taxon>Betaproteobacteria</taxon>
        <taxon>Burkholderiales</taxon>
        <taxon>Burkholderiaceae</taxon>
        <taxon>Paraburkholderia</taxon>
    </lineage>
</organism>
<reference key="1">
    <citation type="journal article" date="2006" name="Proc. Natl. Acad. Sci. U.S.A.">
        <title>Burkholderia xenovorans LB400 harbors a multi-replicon, 9.73-Mbp genome shaped for versatility.</title>
        <authorList>
            <person name="Chain P.S.G."/>
            <person name="Denef V.J."/>
            <person name="Konstantinidis K.T."/>
            <person name="Vergez L.M."/>
            <person name="Agullo L."/>
            <person name="Reyes V.L."/>
            <person name="Hauser L."/>
            <person name="Cordova M."/>
            <person name="Gomez L."/>
            <person name="Gonzalez M."/>
            <person name="Land M."/>
            <person name="Lao V."/>
            <person name="Larimer F."/>
            <person name="LiPuma J.J."/>
            <person name="Mahenthiralingam E."/>
            <person name="Malfatti S.A."/>
            <person name="Marx C.J."/>
            <person name="Parnell J.J."/>
            <person name="Ramette A."/>
            <person name="Richardson P."/>
            <person name="Seeger M."/>
            <person name="Smith D."/>
            <person name="Spilker T."/>
            <person name="Sul W.J."/>
            <person name="Tsoi T.V."/>
            <person name="Ulrich L.E."/>
            <person name="Zhulin I.B."/>
            <person name="Tiedje J.M."/>
        </authorList>
    </citation>
    <scope>NUCLEOTIDE SEQUENCE [LARGE SCALE GENOMIC DNA]</scope>
    <source>
        <strain>LB400</strain>
    </source>
</reference>
<gene>
    <name evidence="1" type="primary">miaB</name>
    <name type="ordered locus">Bxeno_A3766</name>
    <name type="ORF">Bxe_A0630</name>
</gene>
<accession>Q13UD5</accession>
<proteinExistence type="inferred from homology"/>
<protein>
    <recommendedName>
        <fullName evidence="1">tRNA-2-methylthio-N(6)-dimethylallyladenosine synthase</fullName>
        <ecNumber evidence="1">2.8.4.3</ecNumber>
    </recommendedName>
    <alternativeName>
        <fullName evidence="1">(Dimethylallyl)adenosine tRNA methylthiotransferase MiaB</fullName>
    </alternativeName>
    <alternativeName>
        <fullName evidence="1">tRNA-i(6)A37 methylthiotransferase</fullName>
    </alternativeName>
</protein>
<evidence type="ECO:0000255" key="1">
    <source>
        <dbReference type="HAMAP-Rule" id="MF_01864"/>
    </source>
</evidence>
<evidence type="ECO:0000255" key="2">
    <source>
        <dbReference type="PROSITE-ProRule" id="PRU01266"/>
    </source>
</evidence>
<sequence length="457" mass="51041">MTKKVYVKTFGCQMNEYDSDKMVDVLGAAEGLVKTDTPEDADVILFNTCSVREKAQEKVFSDLGRVRELKEANPNLIIGVGGCVASQEGASIVARAPYVDLVFGPQTLHRLPQMIDKRRESGRAQVDISFPEIEKFDHLPPARVDGPSAFVSIMEGCSKYCSYCVVPYTRGEEVSRPLDDVLTEIAGLADQGVREVTLLGQNVNAYRAGLTLGSTEIADFAQLIEYVADIPGIERIRYTTSHPKEFTQRLIDTYAKVPKLVSHLHLPVQHGSDRILMAMKRGYTVLEYKSVIRKLRAIRPDLSLSTDLIVGFPGETEEDFDKMMTLVHEMKYDTSFSFIYSPRPGTPAANLHDDTPREVKLRRLQHLQATIEENVQRISDSMVGKIERILVERPARKDPNELAGRTENNRVVNFPAPVASHARLIGQMVDVKIVKAYPHSLRGELVLVHDEAPATTH</sequence>
<comment type="function">
    <text evidence="1">Catalyzes the methylthiolation of N6-(dimethylallyl)adenosine (i(6)A), leading to the formation of 2-methylthio-N6-(dimethylallyl)adenosine (ms(2)i(6)A) at position 37 in tRNAs that read codons beginning with uridine.</text>
</comment>
<comment type="catalytic activity">
    <reaction evidence="1">
        <text>N(6)-dimethylallyladenosine(37) in tRNA + (sulfur carrier)-SH + AH2 + 2 S-adenosyl-L-methionine = 2-methylsulfanyl-N(6)-dimethylallyladenosine(37) in tRNA + (sulfur carrier)-H + 5'-deoxyadenosine + L-methionine + A + S-adenosyl-L-homocysteine + 2 H(+)</text>
        <dbReference type="Rhea" id="RHEA:37067"/>
        <dbReference type="Rhea" id="RHEA-COMP:10375"/>
        <dbReference type="Rhea" id="RHEA-COMP:10376"/>
        <dbReference type="Rhea" id="RHEA-COMP:14737"/>
        <dbReference type="Rhea" id="RHEA-COMP:14739"/>
        <dbReference type="ChEBI" id="CHEBI:13193"/>
        <dbReference type="ChEBI" id="CHEBI:15378"/>
        <dbReference type="ChEBI" id="CHEBI:17319"/>
        <dbReference type="ChEBI" id="CHEBI:17499"/>
        <dbReference type="ChEBI" id="CHEBI:29917"/>
        <dbReference type="ChEBI" id="CHEBI:57844"/>
        <dbReference type="ChEBI" id="CHEBI:57856"/>
        <dbReference type="ChEBI" id="CHEBI:59789"/>
        <dbReference type="ChEBI" id="CHEBI:64428"/>
        <dbReference type="ChEBI" id="CHEBI:74415"/>
        <dbReference type="ChEBI" id="CHEBI:74417"/>
        <dbReference type="EC" id="2.8.4.3"/>
    </reaction>
</comment>
<comment type="cofactor">
    <cofactor evidence="1">
        <name>[4Fe-4S] cluster</name>
        <dbReference type="ChEBI" id="CHEBI:49883"/>
    </cofactor>
    <text evidence="1">Binds 2 [4Fe-4S] clusters. One cluster is coordinated with 3 cysteines and an exchangeable S-adenosyl-L-methionine.</text>
</comment>
<comment type="subunit">
    <text evidence="1">Monomer.</text>
</comment>
<comment type="subcellular location">
    <subcellularLocation>
        <location evidence="1">Cytoplasm</location>
    </subcellularLocation>
</comment>
<comment type="similarity">
    <text evidence="1">Belongs to the methylthiotransferase family. MiaB subfamily.</text>
</comment>